<keyword id="KW-0416">Keratin</keyword>
<keyword id="KW-1185">Reference proteome</keyword>
<keyword id="KW-0677">Repeat</keyword>
<organism>
    <name type="scientific">Mus musculus</name>
    <name type="common">Mouse</name>
    <dbReference type="NCBI Taxonomy" id="10090"/>
    <lineage>
        <taxon>Eukaryota</taxon>
        <taxon>Metazoa</taxon>
        <taxon>Chordata</taxon>
        <taxon>Craniata</taxon>
        <taxon>Vertebrata</taxon>
        <taxon>Euteleostomi</taxon>
        <taxon>Mammalia</taxon>
        <taxon>Eutheria</taxon>
        <taxon>Euarchontoglires</taxon>
        <taxon>Glires</taxon>
        <taxon>Rodentia</taxon>
        <taxon>Myomorpha</taxon>
        <taxon>Muroidea</taxon>
        <taxon>Muridae</taxon>
        <taxon>Murinae</taxon>
        <taxon>Mus</taxon>
        <taxon>Mus</taxon>
    </lineage>
</organism>
<reference evidence="8" key="1">
    <citation type="submission" date="2001-01" db="EMBL/GenBank/DDBJ databases">
        <title>cDNA cloning of a new member of mouse high-glycine/tyrosine protein.</title>
        <authorList>
            <person name="Fujiwara K."/>
            <person name="Poirier C."/>
            <person name="Hattori A."/>
            <person name="Noro C."/>
            <person name="Yoshiki A."/>
            <person name="Kusakabe M."/>
        </authorList>
    </citation>
    <scope>NUCLEOTIDE SEQUENCE [MRNA]</scope>
    <source>
        <strain evidence="8">C3H/HeN</strain>
        <tissue evidence="8">Skin</tissue>
    </source>
</reference>
<reference evidence="9" key="2">
    <citation type="journal article" date="2005" name="Science">
        <title>The transcriptional landscape of the mammalian genome.</title>
        <authorList>
            <person name="Carninci P."/>
            <person name="Kasukawa T."/>
            <person name="Katayama S."/>
            <person name="Gough J."/>
            <person name="Frith M.C."/>
            <person name="Maeda N."/>
            <person name="Oyama R."/>
            <person name="Ravasi T."/>
            <person name="Lenhard B."/>
            <person name="Wells C."/>
            <person name="Kodzius R."/>
            <person name="Shimokawa K."/>
            <person name="Bajic V.B."/>
            <person name="Brenner S.E."/>
            <person name="Batalov S."/>
            <person name="Forrest A.R."/>
            <person name="Zavolan M."/>
            <person name="Davis M.J."/>
            <person name="Wilming L.G."/>
            <person name="Aidinis V."/>
            <person name="Allen J.E."/>
            <person name="Ambesi-Impiombato A."/>
            <person name="Apweiler R."/>
            <person name="Aturaliya R.N."/>
            <person name="Bailey T.L."/>
            <person name="Bansal M."/>
            <person name="Baxter L."/>
            <person name="Beisel K.W."/>
            <person name="Bersano T."/>
            <person name="Bono H."/>
            <person name="Chalk A.M."/>
            <person name="Chiu K.P."/>
            <person name="Choudhary V."/>
            <person name="Christoffels A."/>
            <person name="Clutterbuck D.R."/>
            <person name="Crowe M.L."/>
            <person name="Dalla E."/>
            <person name="Dalrymple B.P."/>
            <person name="de Bono B."/>
            <person name="Della Gatta G."/>
            <person name="di Bernardo D."/>
            <person name="Down T."/>
            <person name="Engstrom P."/>
            <person name="Fagiolini M."/>
            <person name="Faulkner G."/>
            <person name="Fletcher C.F."/>
            <person name="Fukushima T."/>
            <person name="Furuno M."/>
            <person name="Futaki S."/>
            <person name="Gariboldi M."/>
            <person name="Georgii-Hemming P."/>
            <person name="Gingeras T.R."/>
            <person name="Gojobori T."/>
            <person name="Green R.E."/>
            <person name="Gustincich S."/>
            <person name="Harbers M."/>
            <person name="Hayashi Y."/>
            <person name="Hensch T.K."/>
            <person name="Hirokawa N."/>
            <person name="Hill D."/>
            <person name="Huminiecki L."/>
            <person name="Iacono M."/>
            <person name="Ikeo K."/>
            <person name="Iwama A."/>
            <person name="Ishikawa T."/>
            <person name="Jakt M."/>
            <person name="Kanapin A."/>
            <person name="Katoh M."/>
            <person name="Kawasawa Y."/>
            <person name="Kelso J."/>
            <person name="Kitamura H."/>
            <person name="Kitano H."/>
            <person name="Kollias G."/>
            <person name="Krishnan S.P."/>
            <person name="Kruger A."/>
            <person name="Kummerfeld S.K."/>
            <person name="Kurochkin I.V."/>
            <person name="Lareau L.F."/>
            <person name="Lazarevic D."/>
            <person name="Lipovich L."/>
            <person name="Liu J."/>
            <person name="Liuni S."/>
            <person name="McWilliam S."/>
            <person name="Madan Babu M."/>
            <person name="Madera M."/>
            <person name="Marchionni L."/>
            <person name="Matsuda H."/>
            <person name="Matsuzawa S."/>
            <person name="Miki H."/>
            <person name="Mignone F."/>
            <person name="Miyake S."/>
            <person name="Morris K."/>
            <person name="Mottagui-Tabar S."/>
            <person name="Mulder N."/>
            <person name="Nakano N."/>
            <person name="Nakauchi H."/>
            <person name="Ng P."/>
            <person name="Nilsson R."/>
            <person name="Nishiguchi S."/>
            <person name="Nishikawa S."/>
            <person name="Nori F."/>
            <person name="Ohara O."/>
            <person name="Okazaki Y."/>
            <person name="Orlando V."/>
            <person name="Pang K.C."/>
            <person name="Pavan W.J."/>
            <person name="Pavesi G."/>
            <person name="Pesole G."/>
            <person name="Petrovsky N."/>
            <person name="Piazza S."/>
            <person name="Reed J."/>
            <person name="Reid J.F."/>
            <person name="Ring B.Z."/>
            <person name="Ringwald M."/>
            <person name="Rost B."/>
            <person name="Ruan Y."/>
            <person name="Salzberg S.L."/>
            <person name="Sandelin A."/>
            <person name="Schneider C."/>
            <person name="Schoenbach C."/>
            <person name="Sekiguchi K."/>
            <person name="Semple C.A."/>
            <person name="Seno S."/>
            <person name="Sessa L."/>
            <person name="Sheng Y."/>
            <person name="Shibata Y."/>
            <person name="Shimada H."/>
            <person name="Shimada K."/>
            <person name="Silva D."/>
            <person name="Sinclair B."/>
            <person name="Sperling S."/>
            <person name="Stupka E."/>
            <person name="Sugiura K."/>
            <person name="Sultana R."/>
            <person name="Takenaka Y."/>
            <person name="Taki K."/>
            <person name="Tammoja K."/>
            <person name="Tan S.L."/>
            <person name="Tang S."/>
            <person name="Taylor M.S."/>
            <person name="Tegner J."/>
            <person name="Teichmann S.A."/>
            <person name="Ueda H.R."/>
            <person name="van Nimwegen E."/>
            <person name="Verardo R."/>
            <person name="Wei C.L."/>
            <person name="Yagi K."/>
            <person name="Yamanishi H."/>
            <person name="Zabarovsky E."/>
            <person name="Zhu S."/>
            <person name="Zimmer A."/>
            <person name="Hide W."/>
            <person name="Bult C."/>
            <person name="Grimmond S.M."/>
            <person name="Teasdale R.D."/>
            <person name="Liu E.T."/>
            <person name="Brusic V."/>
            <person name="Quackenbush J."/>
            <person name="Wahlestedt C."/>
            <person name="Mattick J.S."/>
            <person name="Hume D.A."/>
            <person name="Kai C."/>
            <person name="Sasaki D."/>
            <person name="Tomaru Y."/>
            <person name="Fukuda S."/>
            <person name="Kanamori-Katayama M."/>
            <person name="Suzuki M."/>
            <person name="Aoki J."/>
            <person name="Arakawa T."/>
            <person name="Iida J."/>
            <person name="Imamura K."/>
            <person name="Itoh M."/>
            <person name="Kato T."/>
            <person name="Kawaji H."/>
            <person name="Kawagashira N."/>
            <person name="Kawashima T."/>
            <person name="Kojima M."/>
            <person name="Kondo S."/>
            <person name="Konno H."/>
            <person name="Nakano K."/>
            <person name="Ninomiya N."/>
            <person name="Nishio T."/>
            <person name="Okada M."/>
            <person name="Plessy C."/>
            <person name="Shibata K."/>
            <person name="Shiraki T."/>
            <person name="Suzuki S."/>
            <person name="Tagami M."/>
            <person name="Waki K."/>
            <person name="Watahiki A."/>
            <person name="Okamura-Oho Y."/>
            <person name="Suzuki H."/>
            <person name="Kawai J."/>
            <person name="Hayashizaki Y."/>
        </authorList>
    </citation>
    <scope>NUCLEOTIDE SEQUENCE [LARGE SCALE MRNA]</scope>
    <source>
        <strain evidence="9">C57BL/6J</strain>
        <tissue evidence="9">Lung</tissue>
    </source>
</reference>
<reference evidence="8" key="3">
    <citation type="submission" date="2005-07" db="EMBL/GenBank/DDBJ databases">
        <authorList>
            <person name="Mural R.J."/>
            <person name="Adams M.D."/>
            <person name="Myers E.W."/>
            <person name="Smith H.O."/>
            <person name="Venter J.C."/>
        </authorList>
    </citation>
    <scope>NUCLEOTIDE SEQUENCE [LARGE SCALE GENOMIC DNA]</scope>
</reference>
<reference evidence="7" key="4">
    <citation type="journal article" date="2004" name="Genome Res.">
        <title>The status, quality, and expansion of the NIH full-length cDNA project: the Mammalian Gene Collection (MGC).</title>
        <authorList>
            <consortium name="The MGC Project Team"/>
        </authorList>
    </citation>
    <scope>NUCLEOTIDE SEQUENCE [LARGE SCALE MRNA]</scope>
</reference>
<reference key="5">
    <citation type="journal article" date="2004" name="J. Biol. Chem.">
        <title>Krtap16, characterization of a new hair keratin-associated protein (KAP) gene complex on mouse chromosome 16 and evidence for regulation by Hoxc13.</title>
        <authorList>
            <person name="Pruett N.D."/>
            <person name="Tkatchenko T.V."/>
            <person name="Jave-Suarez L."/>
            <person name="Jacobs D.F."/>
            <person name="Potter C.S."/>
            <person name="Tkatchenko A.V."/>
            <person name="Schweizer J."/>
            <person name="Awgulewitsch A."/>
        </authorList>
    </citation>
    <scope>INDUCTION BY HOXC13</scope>
    <source>
        <strain>FVB/NJ</strain>
        <tissue>Skin</tissue>
    </source>
</reference>
<reference evidence="6" key="6">
    <citation type="journal article" date="2007" name="Development">
        <title>Transcriptome and phenotypic analysis reveals Gata3-dependent signalling pathways in murine hair follicles.</title>
        <authorList>
            <person name="Kurek D."/>
            <person name="Garinis G.A."/>
            <person name="van Doorninck J.H."/>
            <person name="van der Wees J."/>
            <person name="Grosveld F.G."/>
        </authorList>
    </citation>
    <scope>INDUCTION</scope>
</reference>
<protein>
    <recommendedName>
        <fullName>Keratin-associated protein 19-9b</fullName>
    </recommendedName>
    <alternativeName>
        <fullName evidence="8">High-glycine/tyrosine protein type I E5</fullName>
    </alternativeName>
    <alternativeName>
        <fullName>Keratin-associated protein 16-10-like</fullName>
    </alternativeName>
    <alternativeName>
        <fullName>Keratin-associated protein 16-10b</fullName>
    </alternativeName>
</protein>
<name>K199B_MOUSE</name>
<gene>
    <name type="primary">Krtap19-9b</name>
    <name type="synonym">Krtap16-10b</name>
    <name type="synonym">Krtap16.10L</name>
</gene>
<sequence length="58" mass="6031">MSYYYGNYYGGLGYGLGGFGGFGGLGYGYGSSYGLGGYGGYGYFSPSFYGGYLSSGFY</sequence>
<accession>Q99NG9</accession>
<accession>Q80VT9</accession>
<comment type="function">
    <text evidence="6">In the hair cortex, hair keratin intermediate filaments are embedded in an interfilamentous matrix, consisting of hair keratin-associated proteins (KRTAP), which are essential for the formation of a rigid and resistant hair shaft through their extensive disulfide bond cross-linking with abundant cysteine residues of hair keratins. The matrix proteins include the high-sulfur and high-glycine-tyrosine keratins.</text>
</comment>
<comment type="subunit">
    <text evidence="1">Interacts with hair keratins.</text>
</comment>
<comment type="induction">
    <text evidence="2 4 5">Expression in skin and hair follicle is regulated by HOXC13 and by GATA3.</text>
</comment>
<comment type="similarity">
    <text evidence="6">Belongs to the KRTAP type 19 family.</text>
</comment>
<proteinExistence type="evidence at transcript level"/>
<dbReference type="EMBL" id="AY026312">
    <property type="protein sequence ID" value="AAK07673.1"/>
    <property type="molecule type" value="mRNA"/>
</dbReference>
<dbReference type="EMBL" id="AK086935">
    <property type="protein sequence ID" value="BAC39767.1"/>
    <property type="molecule type" value="mRNA"/>
</dbReference>
<dbReference type="EMBL" id="CH466521">
    <property type="protein sequence ID" value="EDK98369.1"/>
    <property type="molecule type" value="Genomic_DNA"/>
</dbReference>
<dbReference type="EMBL" id="BC119613">
    <property type="protein sequence ID" value="AAI19614.1"/>
    <property type="molecule type" value="mRNA"/>
</dbReference>
<dbReference type="EMBL" id="BC119614">
    <property type="protein sequence ID" value="AAI19615.1"/>
    <property type="molecule type" value="mRNA"/>
</dbReference>
<dbReference type="CCDS" id="CCDS49896.1"/>
<dbReference type="RefSeq" id="NP_579937.1">
    <property type="nucleotide sequence ID" value="NM_133359.2"/>
</dbReference>
<dbReference type="STRING" id="10090.ENSMUSP00000076896"/>
<dbReference type="PaxDb" id="10090-ENSMUSP00000076896"/>
<dbReference type="DNASU" id="170939"/>
<dbReference type="Ensembl" id="ENSMUST00000077715.6">
    <property type="protein sequence ID" value="ENSMUSP00000076896.5"/>
    <property type="gene ID" value="ENSMUSG00000057174.6"/>
</dbReference>
<dbReference type="GeneID" id="170939"/>
<dbReference type="KEGG" id="mmu:170939"/>
<dbReference type="UCSC" id="uc007zvm.1">
    <property type="organism name" value="mouse"/>
</dbReference>
<dbReference type="AGR" id="MGI:2181750"/>
<dbReference type="CTD" id="170939"/>
<dbReference type="MGI" id="MGI:2181750">
    <property type="gene designation" value="Krtap19-9b"/>
</dbReference>
<dbReference type="VEuPathDB" id="HostDB:ENSMUSG00000057174"/>
<dbReference type="GeneTree" id="ENSGT00860000135680"/>
<dbReference type="HOGENOM" id="CLU_184630_3_0_1"/>
<dbReference type="InParanoid" id="Q99NG9"/>
<dbReference type="OMA" id="FYARYWS"/>
<dbReference type="BioGRID-ORCS" id="170939">
    <property type="hits" value="3 hits in 78 CRISPR screens"/>
</dbReference>
<dbReference type="PRO" id="PR:Q99NG9"/>
<dbReference type="Proteomes" id="UP000000589">
    <property type="component" value="Chromosome 16"/>
</dbReference>
<dbReference type="RNAct" id="Q99NG9">
    <property type="molecule type" value="protein"/>
</dbReference>
<dbReference type="Bgee" id="ENSMUSG00000057174">
    <property type="expression patterns" value="Expressed in lip and 6 other cell types or tissues"/>
</dbReference>
<dbReference type="GO" id="GO:0005829">
    <property type="term" value="C:cytosol"/>
    <property type="evidence" value="ECO:0007669"/>
    <property type="project" value="UniProtKB-ARBA"/>
</dbReference>
<dbReference type="GO" id="GO:0005882">
    <property type="term" value="C:intermediate filament"/>
    <property type="evidence" value="ECO:0007669"/>
    <property type="project" value="UniProtKB-KW"/>
</dbReference>
<dbReference type="InterPro" id="IPR021743">
    <property type="entry name" value="KRTAP_type8/19/20/21/22"/>
</dbReference>
<dbReference type="Pfam" id="PF11759">
    <property type="entry name" value="KRTAP"/>
    <property type="match status" value="1"/>
</dbReference>
<feature type="chain" id="PRO_0000356211" description="Keratin-associated protein 19-9b">
    <location>
        <begin position="1"/>
        <end position="58"/>
    </location>
</feature>
<feature type="region of interest" description="12 X 2 AA repeats of G-[YCGS]" evidence="3">
    <location>
        <begin position="6"/>
        <end position="52"/>
    </location>
</feature>
<evidence type="ECO:0000250" key="1"/>
<evidence type="ECO:0000250" key="2">
    <source>
        <dbReference type="UniProtKB" id="Q925H6"/>
    </source>
</evidence>
<evidence type="ECO:0000255" key="3"/>
<evidence type="ECO:0000269" key="4">
    <source>
    </source>
</evidence>
<evidence type="ECO:0000269" key="5">
    <source>
    </source>
</evidence>
<evidence type="ECO:0000305" key="6"/>
<evidence type="ECO:0000312" key="7">
    <source>
        <dbReference type="EMBL" id="AAI19614.1"/>
    </source>
</evidence>
<evidence type="ECO:0000312" key="8">
    <source>
        <dbReference type="EMBL" id="AAK07673.1"/>
    </source>
</evidence>
<evidence type="ECO:0000312" key="9">
    <source>
        <dbReference type="EMBL" id="BAC39767.1"/>
    </source>
</evidence>